<sequence>MDDGVGVRAGCIRIRCPSPRRIVSRWLSPQGKVKGKKTPMAEPRVRDSDTVRIRTSSEDDHHRVGQFSDSPPPTIPSELQRREFLFSIGMSCYLIHLIATGRQEIHKIVELRNDLDKFLECRNEELRQKQQEFVELRNDIHKFLEFHNNELRRKQLEKTETSAYSATSDVVDGPESSTDHYYSPQIIQTSMSVGGEGSLSHYVYKLENDSGGEMDQLEAELEAEFELLQIGHNQEVSEDAEGLRLGHVCPGLVEEQQGVCPYELERRLYELMETRQQEEIKELEIALDDAKQRLHLKETEASWWKDTAYIVSERIPEPSRITHSSRTHPYPLSR</sequence>
<name>PL1_ARATH</name>
<gene>
    <name evidence="5" type="primary">PL1</name>
    <name evidence="7" type="ordered locus">At5g10890</name>
    <name evidence="8" type="ORF">T30N20.160</name>
</gene>
<accession>A0A1P8B9P9</accession>
<accession>Q9LEV1</accession>
<dbReference type="EMBL" id="AL365234">
    <property type="protein sequence ID" value="CAB96844.1"/>
    <property type="status" value="ALT_INIT"/>
    <property type="molecule type" value="Genomic_DNA"/>
</dbReference>
<dbReference type="EMBL" id="CP002688">
    <property type="protein sequence ID" value="AED91606.1"/>
    <property type="status" value="ALT_INIT"/>
    <property type="molecule type" value="Genomic_DNA"/>
</dbReference>
<dbReference type="EMBL" id="CP002688">
    <property type="protein sequence ID" value="ANM68326.1"/>
    <property type="molecule type" value="Genomic_DNA"/>
</dbReference>
<dbReference type="PIR" id="T50798">
    <property type="entry name" value="T50798"/>
</dbReference>
<dbReference type="RefSeq" id="NP_001330090.1">
    <property type="nucleotide sequence ID" value="NM_001343140.1"/>
</dbReference>
<dbReference type="RefSeq" id="NP_196650.1">
    <property type="nucleotide sequence ID" value="NM_121127.2"/>
</dbReference>
<dbReference type="SMR" id="A0A1P8B9P9"/>
<dbReference type="STRING" id="3702.A0A1P8B9P9"/>
<dbReference type="PaxDb" id="3702-AT5G10890.1"/>
<dbReference type="EnsemblPlants" id="AT5G10890.2">
    <property type="protein sequence ID" value="AT5G10890.2"/>
    <property type="gene ID" value="AT5G10890"/>
</dbReference>
<dbReference type="GeneID" id="830956"/>
<dbReference type="Gramene" id="AT5G10890.2">
    <property type="protein sequence ID" value="AT5G10890.2"/>
    <property type="gene ID" value="AT5G10890"/>
</dbReference>
<dbReference type="KEGG" id="ath:AT5G10890"/>
<dbReference type="Araport" id="AT5G10890"/>
<dbReference type="TAIR" id="AT5G10890"/>
<dbReference type="eggNOG" id="ENOG502RZ5T">
    <property type="taxonomic scope" value="Eukaryota"/>
</dbReference>
<dbReference type="HOGENOM" id="CLU_063347_1_0_1"/>
<dbReference type="InParanoid" id="A0A1P8B9P9"/>
<dbReference type="OMA" id="DQHHHVY"/>
<dbReference type="PRO" id="PR:A0A1P8B9P9"/>
<dbReference type="Proteomes" id="UP000006548">
    <property type="component" value="Chromosome 5"/>
</dbReference>
<dbReference type="ExpressionAtlas" id="A0A1P8B9P9">
    <property type="expression patterns" value="baseline and differential"/>
</dbReference>
<dbReference type="GO" id="GO:0005938">
    <property type="term" value="C:cell cortex"/>
    <property type="evidence" value="ECO:0007669"/>
    <property type="project" value="UniProtKB-SubCell"/>
</dbReference>
<dbReference type="GO" id="GO:0008356">
    <property type="term" value="P:asymmetric cell division"/>
    <property type="evidence" value="ECO:0007669"/>
    <property type="project" value="InterPro"/>
</dbReference>
<dbReference type="InterPro" id="IPR040348">
    <property type="entry name" value="POLAR-like"/>
</dbReference>
<dbReference type="PANTHER" id="PTHR33476">
    <property type="entry name" value="EMB|CAB62613.1"/>
    <property type="match status" value="1"/>
</dbReference>
<dbReference type="PANTHER" id="PTHR33476:SF21">
    <property type="entry name" value="PROTEIN POLAR-LIKE 1"/>
    <property type="match status" value="1"/>
</dbReference>
<evidence type="ECO:0000250" key="1">
    <source>
        <dbReference type="UniProtKB" id="Q6NQ99"/>
    </source>
</evidence>
<evidence type="ECO:0000255" key="2"/>
<evidence type="ECO:0000256" key="3">
    <source>
        <dbReference type="SAM" id="MobiDB-lite"/>
    </source>
</evidence>
<evidence type="ECO:0000269" key="4">
    <source>
    </source>
</evidence>
<evidence type="ECO:0000303" key="5">
    <source>
    </source>
</evidence>
<evidence type="ECO:0000305" key="6"/>
<evidence type="ECO:0000312" key="7">
    <source>
        <dbReference type="Araport" id="AT5G10890"/>
    </source>
</evidence>
<evidence type="ECO:0000312" key="8">
    <source>
        <dbReference type="EMBL" id="CAB96844.1"/>
    </source>
</evidence>
<reference key="1">
    <citation type="journal article" date="2000" name="Nature">
        <title>Sequence and analysis of chromosome 5 of the plant Arabidopsis thaliana.</title>
        <authorList>
            <person name="Tabata S."/>
            <person name="Kaneko T."/>
            <person name="Nakamura Y."/>
            <person name="Kotani H."/>
            <person name="Kato T."/>
            <person name="Asamizu E."/>
            <person name="Miyajima N."/>
            <person name="Sasamoto S."/>
            <person name="Kimura T."/>
            <person name="Hosouchi T."/>
            <person name="Kawashima K."/>
            <person name="Kohara M."/>
            <person name="Matsumoto M."/>
            <person name="Matsuno A."/>
            <person name="Muraki A."/>
            <person name="Nakayama S."/>
            <person name="Nakazaki N."/>
            <person name="Naruo K."/>
            <person name="Okumura S."/>
            <person name="Shinpo S."/>
            <person name="Takeuchi C."/>
            <person name="Wada T."/>
            <person name="Watanabe A."/>
            <person name="Yamada M."/>
            <person name="Yasuda M."/>
            <person name="Sato S."/>
            <person name="de la Bastide M."/>
            <person name="Huang E."/>
            <person name="Spiegel L."/>
            <person name="Gnoj L."/>
            <person name="O'Shaughnessy A."/>
            <person name="Preston R."/>
            <person name="Habermann K."/>
            <person name="Murray J."/>
            <person name="Johnson D."/>
            <person name="Rohlfing T."/>
            <person name="Nelson J."/>
            <person name="Stoneking T."/>
            <person name="Pepin K."/>
            <person name="Spieth J."/>
            <person name="Sekhon M."/>
            <person name="Armstrong J."/>
            <person name="Becker M."/>
            <person name="Belter E."/>
            <person name="Cordum H."/>
            <person name="Cordes M."/>
            <person name="Courtney L."/>
            <person name="Courtney W."/>
            <person name="Dante M."/>
            <person name="Du H."/>
            <person name="Edwards J."/>
            <person name="Fryman J."/>
            <person name="Haakensen B."/>
            <person name="Lamar E."/>
            <person name="Latreille P."/>
            <person name="Leonard S."/>
            <person name="Meyer R."/>
            <person name="Mulvaney E."/>
            <person name="Ozersky P."/>
            <person name="Riley A."/>
            <person name="Strowmatt C."/>
            <person name="Wagner-McPherson C."/>
            <person name="Wollam A."/>
            <person name="Yoakum M."/>
            <person name="Bell M."/>
            <person name="Dedhia N."/>
            <person name="Parnell L."/>
            <person name="Shah R."/>
            <person name="Rodriguez M."/>
            <person name="Hoon See L."/>
            <person name="Vil D."/>
            <person name="Baker J."/>
            <person name="Kirchoff K."/>
            <person name="Toth K."/>
            <person name="King L."/>
            <person name="Bahret A."/>
            <person name="Miller B."/>
            <person name="Marra M.A."/>
            <person name="Martienssen R."/>
            <person name="McCombie W.R."/>
            <person name="Wilson R.K."/>
            <person name="Murphy G."/>
            <person name="Bancroft I."/>
            <person name="Volckaert G."/>
            <person name="Wambutt R."/>
            <person name="Duesterhoeft A."/>
            <person name="Stiekema W."/>
            <person name="Pohl T."/>
            <person name="Entian K.-D."/>
            <person name="Terryn N."/>
            <person name="Hartley N."/>
            <person name="Bent E."/>
            <person name="Johnson S."/>
            <person name="Langham S.-A."/>
            <person name="McCullagh B."/>
            <person name="Robben J."/>
            <person name="Grymonprez B."/>
            <person name="Zimmermann W."/>
            <person name="Ramsperger U."/>
            <person name="Wedler H."/>
            <person name="Balke K."/>
            <person name="Wedler E."/>
            <person name="Peters S."/>
            <person name="van Staveren M."/>
            <person name="Dirkse W."/>
            <person name="Mooijman P."/>
            <person name="Klein Lankhorst R."/>
            <person name="Weitzenegger T."/>
            <person name="Bothe G."/>
            <person name="Rose M."/>
            <person name="Hauf J."/>
            <person name="Berneiser S."/>
            <person name="Hempel S."/>
            <person name="Feldpausch M."/>
            <person name="Lamberth S."/>
            <person name="Villarroel R."/>
            <person name="Gielen J."/>
            <person name="Ardiles W."/>
            <person name="Bents O."/>
            <person name="Lemcke K."/>
            <person name="Kolesov G."/>
            <person name="Mayer K.F.X."/>
            <person name="Rudd S."/>
            <person name="Schoof H."/>
            <person name="Schueller C."/>
            <person name="Zaccaria P."/>
            <person name="Mewes H.-W."/>
            <person name="Bevan M."/>
            <person name="Fransz P.F."/>
        </authorList>
    </citation>
    <scope>NUCLEOTIDE SEQUENCE [LARGE SCALE GENOMIC DNA]</scope>
    <source>
        <strain>cv. Columbia</strain>
    </source>
</reference>
<reference key="2">
    <citation type="journal article" date="2017" name="Plant J.">
        <title>Araport11: a complete reannotation of the Arabidopsis thaliana reference genome.</title>
        <authorList>
            <person name="Cheng C.Y."/>
            <person name="Krishnakumar V."/>
            <person name="Chan A.P."/>
            <person name="Thibaud-Nissen F."/>
            <person name="Schobel S."/>
            <person name="Town C.D."/>
        </authorList>
    </citation>
    <scope>GENOME REANNOTATION</scope>
    <source>
        <strain>cv. Columbia</strain>
    </source>
</reference>
<reference key="3">
    <citation type="journal article" date="2018" name="Nature">
        <title>POLAR-guided signalling complex assembly and localization drive asymmetric cell division.</title>
        <authorList>
            <person name="Houbaert A."/>
            <person name="Zhang C."/>
            <person name="Tiwari M."/>
            <person name="Wang K."/>
            <person name="de Marcos Serrano A."/>
            <person name="Savatin D.V."/>
            <person name="Urs M.J."/>
            <person name="Zhiponova M.K."/>
            <person name="Gudesblat G.E."/>
            <person name="Vanhoutte I."/>
            <person name="Eeckhout D."/>
            <person name="Boeren S."/>
            <person name="Karimi M."/>
            <person name="Betti C."/>
            <person name="Jacobs T."/>
            <person name="Fenoll C."/>
            <person name="Mena M."/>
            <person name="de Vries S."/>
            <person name="De Jaeger G."/>
            <person name="Russinova E."/>
        </authorList>
    </citation>
    <scope>FUNCTION</scope>
    <scope>DISRUPTION PHENOTYPE</scope>
    <source>
        <strain>cv. Columbia</strain>
    </source>
</reference>
<feature type="chain" id="PRO_0000446320" description="Protein POLAR-like 1">
    <location>
        <begin position="1"/>
        <end position="334"/>
    </location>
</feature>
<feature type="region of interest" description="Disordered" evidence="3">
    <location>
        <begin position="53"/>
        <end position="74"/>
    </location>
</feature>
<feature type="coiled-coil region" evidence="2">
    <location>
        <begin position="273"/>
        <end position="300"/>
    </location>
</feature>
<feature type="compositionally biased region" description="Basic and acidic residues" evidence="3">
    <location>
        <begin position="53"/>
        <end position="63"/>
    </location>
</feature>
<protein>
    <recommendedName>
        <fullName evidence="5">Protein POLAR-like 1</fullName>
    </recommendedName>
</protein>
<keyword id="KW-0175">Coiled coil</keyword>
<keyword id="KW-0963">Cytoplasm</keyword>
<keyword id="KW-1185">Reference proteome</keyword>
<organism>
    <name type="scientific">Arabidopsis thaliana</name>
    <name type="common">Mouse-ear cress</name>
    <dbReference type="NCBI Taxonomy" id="3702"/>
    <lineage>
        <taxon>Eukaryota</taxon>
        <taxon>Viridiplantae</taxon>
        <taxon>Streptophyta</taxon>
        <taxon>Embryophyta</taxon>
        <taxon>Tracheophyta</taxon>
        <taxon>Spermatophyta</taxon>
        <taxon>Magnoliopsida</taxon>
        <taxon>eudicotyledons</taxon>
        <taxon>Gunneridae</taxon>
        <taxon>Pentapetalae</taxon>
        <taxon>rosids</taxon>
        <taxon>malvids</taxon>
        <taxon>Brassicales</taxon>
        <taxon>Brassicaceae</taxon>
        <taxon>Camelineae</taxon>
        <taxon>Arabidopsis</taxon>
    </lineage>
</organism>
<proteinExistence type="inferred from homology"/>
<comment type="function">
    <text evidence="4">Acts as a stomatal lineage scaffold which regulates subcellular localization and transient polarization of kinases (e.g. ASK7/BIN2 and ASK3/SK12) involved in asymmetric cell division (ACD) in a BASL-dependent manner.</text>
</comment>
<comment type="subcellular location">
    <subcellularLocation>
        <location evidence="1">Cytoplasm</location>
    </subcellularLocation>
    <subcellularLocation>
        <location evidence="1">Cytoplasm</location>
        <location evidence="1">Cell cortex</location>
    </subcellularLocation>
    <text evidence="1">Localized throughout the plasma membrane in asymmetric cell division (ACD) precursors (By similarity). Transient polar localization and segregation unevenly (distal to the newly divided meristemoid and parallel to the division plane) during meristemoid asymmetric divisions in a BASL-dependent manner (By similarity). Present in the cytoplasm of meristemoids and cell periphery in stomatal lineage ground cells (SLGCs), in a polarized pattern (By similarity).</text>
</comment>
<comment type="disruption phenotype">
    <text evidence="4">Decreased accumulation of ASK7/BIN2 at the plasma membrane and impaired polarization of ASK7/BIN2 in asymmetric cell division (ACD) precursors thus leading to its nuclear localization in the meristemoids.</text>
</comment>
<comment type="sequence caution" evidence="6">
    <conflict type="erroneous initiation">
        <sequence resource="EMBL-CDS" id="AED91606"/>
    </conflict>
    <text>Truncated N-terminus.</text>
</comment>
<comment type="sequence caution" evidence="6">
    <conflict type="erroneous initiation">
        <sequence resource="EMBL-CDS" id="CAB96844"/>
    </conflict>
    <text>Truncated N-terminus.</text>
</comment>